<organism evidence="7">
    <name type="scientific">Caenorhabditis elegans</name>
    <dbReference type="NCBI Taxonomy" id="6239"/>
    <lineage>
        <taxon>Eukaryota</taxon>
        <taxon>Metazoa</taxon>
        <taxon>Ecdysozoa</taxon>
        <taxon>Nematoda</taxon>
        <taxon>Chromadorea</taxon>
        <taxon>Rhabditida</taxon>
        <taxon>Rhabditina</taxon>
        <taxon>Rhabditomorpha</taxon>
        <taxon>Rhabditoidea</taxon>
        <taxon>Rhabditidae</taxon>
        <taxon>Peloderinae</taxon>
        <taxon>Caenorhabditis</taxon>
    </lineage>
</organism>
<comment type="function">
    <text evidence="3 4">Probable transcription factor (PubMed:29108019, PubMed:9247331). During development, required for cell fate specification, probably by promoting or repressing expression of genes involved in specific cell fate (PubMed:29108019, PubMed:9247331). Involved in specifying lineages derived from the epidermal stem cells of the lateral ectoderm, known as seam cells (PubMed:29108019, PubMed:9247331). Modulates symmetric divisions of seam cells, perhaps in concert with the Wnt signaling pathway (PubMed:29108019). May repress expression of homeobox genes mab-5, egl-5 and lin-39 (PubMed:9247331).</text>
</comment>
<comment type="subcellular location">
    <subcellularLocation>
        <location evidence="1">Nucleus</location>
    </subcellularLocation>
</comment>
<comment type="tissue specificity">
    <text evidence="3">Expressed mostly in the seam (stem) cells and hypodermis (hyp7), but also to a lesser extent in the intestine.</text>
</comment>
<comment type="disruption phenotype">
    <text evidence="3">RNAi-mediated knockdown leads to an increase in seam (stem) cell number variability.</text>
</comment>
<protein>
    <recommendedName>
        <fullName evidence="5">Helix-loop-helix protein lin-22</fullName>
    </recommendedName>
    <alternativeName>
        <fullName evidence="8">Lineage abnormal protein 22</fullName>
    </alternativeName>
</protein>
<keyword id="KW-0238">DNA-binding</keyword>
<keyword id="KW-0539">Nucleus</keyword>
<keyword id="KW-1185">Reference proteome</keyword>
<keyword id="KW-0804">Transcription</keyword>
<keyword id="KW-0805">Transcription regulation</keyword>
<sequence length="173" mass="19543">MTSFLCSDTEIESDGGISRCKKIKNKPLMEKKRRARINKSLSQLKQILIQDEHKNSIQHSKWEKADILEMAVEYLQQLRSAQPCSLSPSTSSISTPPTPKEEIRNIKVPLNPIASFLNPMMQQYVAYQQLAQLSMYTQLFNNPAGVPLRADAGVTAQSPELAEKLKIEDRSRV</sequence>
<dbReference type="EMBL" id="AF020555">
    <property type="protein sequence ID" value="AAB68848.1"/>
    <property type="molecule type" value="mRNA"/>
</dbReference>
<dbReference type="EMBL" id="BX284604">
    <property type="protein sequence ID" value="CCD83486.1"/>
    <property type="molecule type" value="Genomic_DNA"/>
</dbReference>
<dbReference type="PIR" id="T42235">
    <property type="entry name" value="T42235"/>
</dbReference>
<dbReference type="RefSeq" id="NP_500281.1">
    <property type="nucleotide sequence ID" value="NM_067880.6"/>
</dbReference>
<dbReference type="SMR" id="G5EF76"/>
<dbReference type="FunCoup" id="G5EF76">
    <property type="interactions" value="91"/>
</dbReference>
<dbReference type="STRING" id="6239.Y54G2A.1.1"/>
<dbReference type="PaxDb" id="6239-Y54G2A.1"/>
<dbReference type="EnsemblMetazoa" id="Y54G2A.1.1">
    <property type="protein sequence ID" value="Y54G2A.1.1"/>
    <property type="gene ID" value="WBGene00003008"/>
</dbReference>
<dbReference type="GeneID" id="177082"/>
<dbReference type="KEGG" id="cel:CELE_Y54G2A.1"/>
<dbReference type="AGR" id="WB:WBGene00003008"/>
<dbReference type="CTD" id="177082"/>
<dbReference type="WormBase" id="Y54G2A.1">
    <property type="protein sequence ID" value="CE26703"/>
    <property type="gene ID" value="WBGene00003008"/>
    <property type="gene designation" value="lin-22"/>
</dbReference>
<dbReference type="eggNOG" id="KOG4304">
    <property type="taxonomic scope" value="Eukaryota"/>
</dbReference>
<dbReference type="HOGENOM" id="CLU_1588040_0_0_1"/>
<dbReference type="InParanoid" id="G5EF76"/>
<dbReference type="OMA" id="YVAYQQL"/>
<dbReference type="OrthoDB" id="6085656at2759"/>
<dbReference type="PRO" id="PR:G5EF76"/>
<dbReference type="Proteomes" id="UP000001940">
    <property type="component" value="Chromosome IV"/>
</dbReference>
<dbReference type="Bgee" id="WBGene00003008">
    <property type="expression patterns" value="Expressed in epithelium and 25 other cell types or tissues"/>
</dbReference>
<dbReference type="GO" id="GO:0005634">
    <property type="term" value="C:nucleus"/>
    <property type="evidence" value="ECO:0000250"/>
    <property type="project" value="WormBase"/>
</dbReference>
<dbReference type="GO" id="GO:0000981">
    <property type="term" value="F:DNA-binding transcription factor activity, RNA polymerase II-specific"/>
    <property type="evidence" value="ECO:0000250"/>
    <property type="project" value="WormBase"/>
</dbReference>
<dbReference type="GO" id="GO:0046983">
    <property type="term" value="F:protein dimerization activity"/>
    <property type="evidence" value="ECO:0007669"/>
    <property type="project" value="InterPro"/>
</dbReference>
<dbReference type="GO" id="GO:0000978">
    <property type="term" value="F:RNA polymerase II cis-regulatory region sequence-specific DNA binding"/>
    <property type="evidence" value="ECO:0000318"/>
    <property type="project" value="GO_Central"/>
</dbReference>
<dbReference type="GO" id="GO:0009952">
    <property type="term" value="P:anterior/posterior pattern specification"/>
    <property type="evidence" value="ECO:0000315"/>
    <property type="project" value="WormBase"/>
</dbReference>
<dbReference type="GO" id="GO:0009957">
    <property type="term" value="P:epidermal cell fate specification"/>
    <property type="evidence" value="ECO:0000315"/>
    <property type="project" value="UniProtKB"/>
</dbReference>
<dbReference type="GO" id="GO:0010629">
    <property type="term" value="P:negative regulation of gene expression"/>
    <property type="evidence" value="ECO:0000315"/>
    <property type="project" value="WormBase"/>
</dbReference>
<dbReference type="GO" id="GO:0045138">
    <property type="term" value="P:nematode male tail tip morphogenesis"/>
    <property type="evidence" value="ECO:0000315"/>
    <property type="project" value="WormBase"/>
</dbReference>
<dbReference type="GO" id="GO:0050767">
    <property type="term" value="P:regulation of neurogenesis"/>
    <property type="evidence" value="ECO:0000318"/>
    <property type="project" value="GO_Central"/>
</dbReference>
<dbReference type="CDD" id="cd11410">
    <property type="entry name" value="bHLH_O_HES"/>
    <property type="match status" value="1"/>
</dbReference>
<dbReference type="FunFam" id="4.10.280.10:FF:000009">
    <property type="entry name" value="Transcription factor HES-1"/>
    <property type="match status" value="1"/>
</dbReference>
<dbReference type="Gene3D" id="4.10.280.10">
    <property type="entry name" value="Helix-loop-helix DNA-binding domain"/>
    <property type="match status" value="1"/>
</dbReference>
<dbReference type="InterPro" id="IPR011598">
    <property type="entry name" value="bHLH_dom"/>
</dbReference>
<dbReference type="InterPro" id="IPR050370">
    <property type="entry name" value="HES_HEY"/>
</dbReference>
<dbReference type="InterPro" id="IPR036638">
    <property type="entry name" value="HLH_DNA-bd_sf"/>
</dbReference>
<dbReference type="PANTHER" id="PTHR10985">
    <property type="entry name" value="BASIC HELIX-LOOP-HELIX TRANSCRIPTION FACTOR, HES-RELATED"/>
    <property type="match status" value="1"/>
</dbReference>
<dbReference type="Pfam" id="PF00010">
    <property type="entry name" value="HLH"/>
    <property type="match status" value="1"/>
</dbReference>
<dbReference type="SMART" id="SM00353">
    <property type="entry name" value="HLH"/>
    <property type="match status" value="1"/>
</dbReference>
<dbReference type="SUPFAM" id="SSF47459">
    <property type="entry name" value="HLH, helix-loop-helix DNA-binding domain"/>
    <property type="match status" value="1"/>
</dbReference>
<dbReference type="PROSITE" id="PS50888">
    <property type="entry name" value="BHLH"/>
    <property type="match status" value="1"/>
</dbReference>
<gene>
    <name evidence="8" type="primary">lin-22</name>
    <name evidence="6" type="synonym">him-5</name>
    <name evidence="8" type="synonym">hlh-9</name>
    <name evidence="8" type="ORF">Y54G2A.1</name>
</gene>
<proteinExistence type="evidence at protein level"/>
<accession>G5EF76</accession>
<feature type="chain" id="PRO_0000452407" description="Helix-loop-helix protein lin-22">
    <location>
        <begin position="1"/>
        <end position="173"/>
    </location>
</feature>
<feature type="domain" description="bHLH" evidence="1">
    <location>
        <begin position="21"/>
        <end position="78"/>
    </location>
</feature>
<feature type="region of interest" description="Basic motif" evidence="1">
    <location>
        <begin position="21"/>
        <end position="34"/>
    </location>
</feature>
<feature type="region of interest" description="Helix-loop-helix motif" evidence="1">
    <location>
        <begin position="35"/>
        <end position="78"/>
    </location>
</feature>
<feature type="region of interest" description="Disordered" evidence="2">
    <location>
        <begin position="83"/>
        <end position="102"/>
    </location>
</feature>
<feature type="compositionally biased region" description="Low complexity" evidence="2">
    <location>
        <begin position="83"/>
        <end position="95"/>
    </location>
</feature>
<feature type="mutagenesis site" description="In n372; alters cell fate specification within the V5 lineage, and also causes anterior V cells to generate V5-like lineages, including ectopic formation of neuronal structures called postdeirids. Ectopic postdeirids are not formed on a lin-32 mutant background." evidence="4">
    <original>E</original>
    <variation>K</variation>
    <location>
        <position position="30"/>
    </location>
</feature>
<name>LIN22_CAEEL</name>
<evidence type="ECO:0000255" key="1">
    <source>
        <dbReference type="PROSITE-ProRule" id="PRU00981"/>
    </source>
</evidence>
<evidence type="ECO:0000256" key="2">
    <source>
        <dbReference type="SAM" id="MobiDB-lite"/>
    </source>
</evidence>
<evidence type="ECO:0000269" key="3">
    <source>
    </source>
</evidence>
<evidence type="ECO:0000269" key="4">
    <source>
    </source>
</evidence>
<evidence type="ECO:0000305" key="5"/>
<evidence type="ECO:0000312" key="6">
    <source>
        <dbReference type="EMBL" id="AAB68848.1"/>
    </source>
</evidence>
<evidence type="ECO:0000312" key="7">
    <source>
        <dbReference type="Proteomes" id="UP000001940"/>
    </source>
</evidence>
<evidence type="ECO:0000312" key="8">
    <source>
        <dbReference type="WormBase" id="Y54G2A.1"/>
    </source>
</evidence>
<reference evidence="6" key="1">
    <citation type="journal article" date="1997" name="Development">
        <title>The role of lin-22, a hairy/enhancer of split homolog, in patterning the peripheral nervous system of C. elegans.</title>
        <authorList>
            <person name="Wrischnik L.A."/>
            <person name="Kenyon C.J."/>
        </authorList>
    </citation>
    <scope>NUCLEOTIDE SEQUENCE [MRNA]</scope>
    <scope>FUNCTION</scope>
    <scope>MUTAGENESIS OF GLU-30</scope>
</reference>
<reference evidence="7" key="2">
    <citation type="journal article" date="1998" name="Science">
        <title>Genome sequence of the nematode C. elegans: a platform for investigating biology.</title>
        <authorList>
            <consortium name="The C. elegans sequencing consortium"/>
        </authorList>
    </citation>
    <scope>NUCLEOTIDE SEQUENCE [LARGE SCALE GENOMIC DNA]</scope>
    <source>
        <strain evidence="7">Bristol N2</strain>
    </source>
</reference>
<reference evidence="5" key="3">
    <citation type="journal article" date="2017" name="PLoS Biol.">
        <title>Stochastic loss and gain of symmetric divisions in the C. elegans epidermis perturbs robustness of stem cell number.</title>
        <authorList>
            <person name="Katsanos D."/>
            <person name="Koneru S.L."/>
            <person name="Mestek Boukhibar L."/>
            <person name="Gritti N."/>
            <person name="Ghose R."/>
            <person name="Appleford P.J."/>
            <person name="Doitsidou M."/>
            <person name="Woollard A."/>
            <person name="van Zon J.S."/>
            <person name="Poole R.J."/>
            <person name="Barkoulas M."/>
        </authorList>
    </citation>
    <scope>FUNCTION</scope>
    <scope>DEVELOPMENTAL STAGE</scope>
    <scope>TISSUE SPECIFICITY</scope>
    <scope>DISRUPTION PHENOTYPE</scope>
</reference>